<dbReference type="EMBL" id="AJ248283">
    <property type="protein sequence ID" value="CAB48970.1"/>
    <property type="molecule type" value="Genomic_DNA"/>
</dbReference>
<dbReference type="EMBL" id="HE613800">
    <property type="protein sequence ID" value="CCE69419.1"/>
    <property type="molecule type" value="Genomic_DNA"/>
</dbReference>
<dbReference type="PIR" id="C75190">
    <property type="entry name" value="C75190"/>
</dbReference>
<dbReference type="RefSeq" id="WP_010867171.1">
    <property type="nucleotide sequence ID" value="NC_000868.1"/>
</dbReference>
<dbReference type="STRING" id="272844.PAB0025"/>
<dbReference type="KEGG" id="pab:PAB0025"/>
<dbReference type="PATRIC" id="fig|272844.11.peg.54"/>
<dbReference type="eggNOG" id="arCOG04274">
    <property type="taxonomic scope" value="Archaea"/>
</dbReference>
<dbReference type="HOGENOM" id="CLU_054212_0_2_2"/>
<dbReference type="OrthoDB" id="46105at2157"/>
<dbReference type="PhylomeDB" id="Q9V2M8"/>
<dbReference type="UniPathway" id="UPA00148"/>
<dbReference type="Proteomes" id="UP000000810">
    <property type="component" value="Chromosome"/>
</dbReference>
<dbReference type="Proteomes" id="UP000009139">
    <property type="component" value="Chromosome"/>
</dbReference>
<dbReference type="GO" id="GO:0005886">
    <property type="term" value="C:plasma membrane"/>
    <property type="evidence" value="ECO:0007669"/>
    <property type="project" value="UniProtKB-SubCell"/>
</dbReference>
<dbReference type="GO" id="GO:0015420">
    <property type="term" value="F:ABC-type vitamin B12 transporter activity"/>
    <property type="evidence" value="ECO:0007669"/>
    <property type="project" value="UniProtKB-UniRule"/>
</dbReference>
<dbReference type="GO" id="GO:0048472">
    <property type="term" value="F:threonine-phosphate decarboxylase activity"/>
    <property type="evidence" value="ECO:0007669"/>
    <property type="project" value="InterPro"/>
</dbReference>
<dbReference type="GO" id="GO:0009236">
    <property type="term" value="P:cobalamin biosynthetic process"/>
    <property type="evidence" value="ECO:0007669"/>
    <property type="project" value="UniProtKB-UniRule"/>
</dbReference>
<dbReference type="HAMAP" id="MF_00024">
    <property type="entry name" value="CobD_CbiB"/>
    <property type="match status" value="1"/>
</dbReference>
<dbReference type="InterPro" id="IPR004485">
    <property type="entry name" value="Cobalamin_biosynth_CobD/CbiB"/>
</dbReference>
<dbReference type="NCBIfam" id="TIGR00380">
    <property type="entry name" value="cobal_cbiB"/>
    <property type="match status" value="1"/>
</dbReference>
<dbReference type="NCBIfam" id="NF002281">
    <property type="entry name" value="PRK01209.2-5"/>
    <property type="match status" value="1"/>
</dbReference>
<dbReference type="PANTHER" id="PTHR34308">
    <property type="entry name" value="COBALAMIN BIOSYNTHESIS PROTEIN CBIB"/>
    <property type="match status" value="1"/>
</dbReference>
<dbReference type="PANTHER" id="PTHR34308:SF1">
    <property type="entry name" value="COBALAMIN BIOSYNTHESIS PROTEIN CBIB"/>
    <property type="match status" value="1"/>
</dbReference>
<dbReference type="Pfam" id="PF03186">
    <property type="entry name" value="CobD_Cbib"/>
    <property type="match status" value="1"/>
</dbReference>
<reference key="1">
    <citation type="journal article" date="2003" name="Mol. Microbiol.">
        <title>An integrated analysis of the genome of the hyperthermophilic archaeon Pyrococcus abyssi.</title>
        <authorList>
            <person name="Cohen G.N."/>
            <person name="Barbe V."/>
            <person name="Flament D."/>
            <person name="Galperin M."/>
            <person name="Heilig R."/>
            <person name="Lecompte O."/>
            <person name="Poch O."/>
            <person name="Prieur D."/>
            <person name="Querellou J."/>
            <person name="Ripp R."/>
            <person name="Thierry J.-C."/>
            <person name="Van der Oost J."/>
            <person name="Weissenbach J."/>
            <person name="Zivanovic Y."/>
            <person name="Forterre P."/>
        </authorList>
    </citation>
    <scope>NUCLEOTIDE SEQUENCE [LARGE SCALE GENOMIC DNA]</scope>
    <source>
        <strain>GE5 / Orsay</strain>
    </source>
</reference>
<reference key="2">
    <citation type="journal article" date="2012" name="Curr. Microbiol.">
        <title>Re-annotation of two hyperthermophilic archaea Pyrococcus abyssi GE5 and Pyrococcus furiosus DSM 3638.</title>
        <authorList>
            <person name="Gao J."/>
            <person name="Wang J."/>
        </authorList>
    </citation>
    <scope>GENOME REANNOTATION</scope>
    <source>
        <strain>GE5 / Orsay</strain>
    </source>
</reference>
<evidence type="ECO:0000250" key="1"/>
<evidence type="ECO:0000255" key="2"/>
<evidence type="ECO:0000305" key="3"/>
<comment type="function">
    <text evidence="1">Converts cobyric acid to cobinamide by the addition of aminopropanol on the F carboxylic group.</text>
</comment>
<comment type="pathway">
    <text>Cofactor biosynthesis; adenosylcobalamin biosynthesis.</text>
</comment>
<comment type="subcellular location">
    <subcellularLocation>
        <location evidence="3">Cell membrane</location>
        <topology evidence="3">Multi-pass membrane protein</topology>
    </subcellularLocation>
</comment>
<comment type="similarity">
    <text evidence="3">Belongs to the CobD/CbiB family.</text>
</comment>
<keyword id="KW-1003">Cell membrane</keyword>
<keyword id="KW-0169">Cobalamin biosynthesis</keyword>
<keyword id="KW-0472">Membrane</keyword>
<keyword id="KW-0812">Transmembrane</keyword>
<keyword id="KW-1133">Transmembrane helix</keyword>
<organism>
    <name type="scientific">Pyrococcus abyssi (strain GE5 / Orsay)</name>
    <dbReference type="NCBI Taxonomy" id="272844"/>
    <lineage>
        <taxon>Archaea</taxon>
        <taxon>Methanobacteriati</taxon>
        <taxon>Methanobacteriota</taxon>
        <taxon>Thermococci</taxon>
        <taxon>Thermococcales</taxon>
        <taxon>Thermococcaceae</taxon>
        <taxon>Pyrococcus</taxon>
    </lineage>
</organism>
<sequence>MNPLILLGLALIWDLLLGEPPAKIHPVVWFGKIAGFLDNRWRRRGKIGFLAGAFVTFIIVALAFFLSLIPSYLTFPLDYLLAIYLLKSSFAIRSLYEHVARTVTEDIEEKRKTVSMIVSRDVKVLDLAHLNSAAIESLAENLNDSVVAPLFYFMLFGLPGAMVYRAVNTLDAMFGYRDERYEYFGKFPARLDDILNFIPARLTVLLYLPFGVKVLKYYKLARFKINSDKPIAAMSAVLGVWLEKPGAYRFPGREPRDEDIKRALDVYKLVVAEYLSIVFVLKVVQLCLNP</sequence>
<proteinExistence type="inferred from homology"/>
<feature type="chain" id="PRO_0000150943" description="Probable cobalamin biosynthesis protein CobD">
    <location>
        <begin position="1"/>
        <end position="290"/>
    </location>
</feature>
<feature type="transmembrane region" description="Helical" evidence="2">
    <location>
        <begin position="4"/>
        <end position="24"/>
    </location>
</feature>
<feature type="transmembrane region" description="Helical" evidence="2">
    <location>
        <begin position="49"/>
        <end position="69"/>
    </location>
</feature>
<feature type="transmembrane region" description="Helical" evidence="2">
    <location>
        <begin position="144"/>
        <end position="164"/>
    </location>
</feature>
<feature type="transmembrane region" description="Helical" evidence="2">
    <location>
        <begin position="269"/>
        <end position="289"/>
    </location>
</feature>
<name>COBD_PYRAB</name>
<accession>Q9V2M8</accession>
<accession>G8ZFM8</accession>
<protein>
    <recommendedName>
        <fullName>Probable cobalamin biosynthesis protein CobD</fullName>
    </recommendedName>
</protein>
<gene>
    <name type="primary">cobD</name>
    <name type="synonym">cbib</name>
    <name type="ordered locus">PYRAB00470</name>
    <name type="ORF">PAB0025</name>
</gene>